<comment type="function">
    <text evidence="1">Excises uracil residues from the DNA which can arise as a result of misincorporation of dUMP residues by DNA polymerase or due to deamination of cytosine.</text>
</comment>
<comment type="catalytic activity">
    <reaction evidence="1">
        <text>Hydrolyzes single-stranded DNA or mismatched double-stranded DNA and polynucleotides, releasing free uracil.</text>
        <dbReference type="EC" id="3.2.2.27"/>
    </reaction>
</comment>
<comment type="subcellular location">
    <subcellularLocation>
        <location evidence="1">Cytoplasm</location>
    </subcellularLocation>
</comment>
<comment type="similarity">
    <text evidence="1">Belongs to the uracil-DNA glycosylase (UDG) superfamily. UNG family.</text>
</comment>
<proteinExistence type="inferred from homology"/>
<name>UNG_XANCP</name>
<gene>
    <name evidence="1" type="primary">ung</name>
    <name type="ordered locus">XCC3772</name>
</gene>
<organism>
    <name type="scientific">Xanthomonas campestris pv. campestris (strain ATCC 33913 / DSM 3586 / NCPPB 528 / LMG 568 / P 25)</name>
    <dbReference type="NCBI Taxonomy" id="190485"/>
    <lineage>
        <taxon>Bacteria</taxon>
        <taxon>Pseudomonadati</taxon>
        <taxon>Pseudomonadota</taxon>
        <taxon>Gammaproteobacteria</taxon>
        <taxon>Lysobacterales</taxon>
        <taxon>Lysobacteraceae</taxon>
        <taxon>Xanthomonas</taxon>
    </lineage>
</organism>
<feature type="chain" id="PRO_0000176167" description="Uracil-DNA glycosylase">
    <location>
        <begin position="1"/>
        <end position="241"/>
    </location>
</feature>
<feature type="active site" description="Proton acceptor" evidence="1">
    <location>
        <position position="71"/>
    </location>
</feature>
<protein>
    <recommendedName>
        <fullName evidence="1">Uracil-DNA glycosylase</fullName>
        <shortName evidence="1">UDG</shortName>
        <ecNumber evidence="1">3.2.2.27</ecNumber>
    </recommendedName>
</protein>
<evidence type="ECO:0000255" key="1">
    <source>
        <dbReference type="HAMAP-Rule" id="MF_00148"/>
    </source>
</evidence>
<accession>Q8P4D7</accession>
<dbReference type="EC" id="3.2.2.27" evidence="1"/>
<dbReference type="EMBL" id="AE008922">
    <property type="protein sequence ID" value="AAM43472.1"/>
    <property type="molecule type" value="Genomic_DNA"/>
</dbReference>
<dbReference type="RefSeq" id="NP_639117.1">
    <property type="nucleotide sequence ID" value="NC_003902.1"/>
</dbReference>
<dbReference type="RefSeq" id="WP_011038854.1">
    <property type="nucleotide sequence ID" value="NC_003902.1"/>
</dbReference>
<dbReference type="SMR" id="Q8P4D7"/>
<dbReference type="STRING" id="190485.XCC3772"/>
<dbReference type="EnsemblBacteria" id="AAM43472">
    <property type="protein sequence ID" value="AAM43472"/>
    <property type="gene ID" value="XCC3772"/>
</dbReference>
<dbReference type="KEGG" id="xcc:XCC3772"/>
<dbReference type="PATRIC" id="fig|190485.4.peg.4037"/>
<dbReference type="eggNOG" id="COG0692">
    <property type="taxonomic scope" value="Bacteria"/>
</dbReference>
<dbReference type="HOGENOM" id="CLU_032162_3_1_6"/>
<dbReference type="OrthoDB" id="9804372at2"/>
<dbReference type="Proteomes" id="UP000001010">
    <property type="component" value="Chromosome"/>
</dbReference>
<dbReference type="GO" id="GO:0005737">
    <property type="term" value="C:cytoplasm"/>
    <property type="evidence" value="ECO:0007669"/>
    <property type="project" value="UniProtKB-SubCell"/>
</dbReference>
<dbReference type="GO" id="GO:0004844">
    <property type="term" value="F:uracil DNA N-glycosylase activity"/>
    <property type="evidence" value="ECO:0007669"/>
    <property type="project" value="UniProtKB-UniRule"/>
</dbReference>
<dbReference type="GO" id="GO:0097510">
    <property type="term" value="P:base-excision repair, AP site formation via deaminated base removal"/>
    <property type="evidence" value="ECO:0000318"/>
    <property type="project" value="GO_Central"/>
</dbReference>
<dbReference type="CDD" id="cd10027">
    <property type="entry name" value="UDG-F1-like"/>
    <property type="match status" value="1"/>
</dbReference>
<dbReference type="FunFam" id="3.40.470.10:FF:000001">
    <property type="entry name" value="Uracil-DNA glycosylase"/>
    <property type="match status" value="1"/>
</dbReference>
<dbReference type="Gene3D" id="3.40.470.10">
    <property type="entry name" value="Uracil-DNA glycosylase-like domain"/>
    <property type="match status" value="1"/>
</dbReference>
<dbReference type="HAMAP" id="MF_00148">
    <property type="entry name" value="UDG"/>
    <property type="match status" value="1"/>
</dbReference>
<dbReference type="InterPro" id="IPR002043">
    <property type="entry name" value="UDG_fam1"/>
</dbReference>
<dbReference type="InterPro" id="IPR018085">
    <property type="entry name" value="Ura-DNA_Glyclase_AS"/>
</dbReference>
<dbReference type="InterPro" id="IPR005122">
    <property type="entry name" value="Uracil-DNA_glycosylase-like"/>
</dbReference>
<dbReference type="InterPro" id="IPR036895">
    <property type="entry name" value="Uracil-DNA_glycosylase-like_sf"/>
</dbReference>
<dbReference type="NCBIfam" id="NF003588">
    <property type="entry name" value="PRK05254.1-1"/>
    <property type="match status" value="1"/>
</dbReference>
<dbReference type="NCBIfam" id="NF003589">
    <property type="entry name" value="PRK05254.1-2"/>
    <property type="match status" value="1"/>
</dbReference>
<dbReference type="NCBIfam" id="NF003591">
    <property type="entry name" value="PRK05254.1-4"/>
    <property type="match status" value="1"/>
</dbReference>
<dbReference type="NCBIfam" id="NF003592">
    <property type="entry name" value="PRK05254.1-5"/>
    <property type="match status" value="1"/>
</dbReference>
<dbReference type="NCBIfam" id="TIGR00628">
    <property type="entry name" value="ung"/>
    <property type="match status" value="1"/>
</dbReference>
<dbReference type="PANTHER" id="PTHR11264">
    <property type="entry name" value="URACIL-DNA GLYCOSYLASE"/>
    <property type="match status" value="1"/>
</dbReference>
<dbReference type="PANTHER" id="PTHR11264:SF0">
    <property type="entry name" value="URACIL-DNA GLYCOSYLASE"/>
    <property type="match status" value="1"/>
</dbReference>
<dbReference type="Pfam" id="PF03167">
    <property type="entry name" value="UDG"/>
    <property type="match status" value="1"/>
</dbReference>
<dbReference type="SMART" id="SM00986">
    <property type="entry name" value="UDG"/>
    <property type="match status" value="1"/>
</dbReference>
<dbReference type="SMART" id="SM00987">
    <property type="entry name" value="UreE_C"/>
    <property type="match status" value="1"/>
</dbReference>
<dbReference type="SUPFAM" id="SSF52141">
    <property type="entry name" value="Uracil-DNA glycosylase-like"/>
    <property type="match status" value="1"/>
</dbReference>
<dbReference type="PROSITE" id="PS00130">
    <property type="entry name" value="U_DNA_GLYCOSYLASE"/>
    <property type="match status" value="1"/>
</dbReference>
<keyword id="KW-0963">Cytoplasm</keyword>
<keyword id="KW-0227">DNA damage</keyword>
<keyword id="KW-0234">DNA repair</keyword>
<keyword id="KW-0378">Hydrolase</keyword>
<keyword id="KW-1185">Reference proteome</keyword>
<reference key="1">
    <citation type="journal article" date="2002" name="Nature">
        <title>Comparison of the genomes of two Xanthomonas pathogens with differing host specificities.</title>
        <authorList>
            <person name="da Silva A.C.R."/>
            <person name="Ferro J.A."/>
            <person name="Reinach F.C."/>
            <person name="Farah C.S."/>
            <person name="Furlan L.R."/>
            <person name="Quaggio R.B."/>
            <person name="Monteiro-Vitorello C.B."/>
            <person name="Van Sluys M.A."/>
            <person name="Almeida N.F. Jr."/>
            <person name="Alves L.M.C."/>
            <person name="do Amaral A.M."/>
            <person name="Bertolini M.C."/>
            <person name="Camargo L.E.A."/>
            <person name="Camarotte G."/>
            <person name="Cannavan F."/>
            <person name="Cardozo J."/>
            <person name="Chambergo F."/>
            <person name="Ciapina L.P."/>
            <person name="Cicarelli R.M.B."/>
            <person name="Coutinho L.L."/>
            <person name="Cursino-Santos J.R."/>
            <person name="El-Dorry H."/>
            <person name="Faria J.B."/>
            <person name="Ferreira A.J.S."/>
            <person name="Ferreira R.C.C."/>
            <person name="Ferro M.I.T."/>
            <person name="Formighieri E.F."/>
            <person name="Franco M.C."/>
            <person name="Greggio C.C."/>
            <person name="Gruber A."/>
            <person name="Katsuyama A.M."/>
            <person name="Kishi L.T."/>
            <person name="Leite R.P."/>
            <person name="Lemos E.G.M."/>
            <person name="Lemos M.V.F."/>
            <person name="Locali E.C."/>
            <person name="Machado M.A."/>
            <person name="Madeira A.M.B.N."/>
            <person name="Martinez-Rossi N.M."/>
            <person name="Martins E.C."/>
            <person name="Meidanis J."/>
            <person name="Menck C.F.M."/>
            <person name="Miyaki C.Y."/>
            <person name="Moon D.H."/>
            <person name="Moreira L.M."/>
            <person name="Novo M.T.M."/>
            <person name="Okura V.K."/>
            <person name="Oliveira M.C."/>
            <person name="Oliveira V.R."/>
            <person name="Pereira H.A."/>
            <person name="Rossi A."/>
            <person name="Sena J.A.D."/>
            <person name="Silva C."/>
            <person name="de Souza R.F."/>
            <person name="Spinola L.A.F."/>
            <person name="Takita M.A."/>
            <person name="Tamura R.E."/>
            <person name="Teixeira E.C."/>
            <person name="Tezza R.I.D."/>
            <person name="Trindade dos Santos M."/>
            <person name="Truffi D."/>
            <person name="Tsai S.M."/>
            <person name="White F.F."/>
            <person name="Setubal J.C."/>
            <person name="Kitajima J.P."/>
        </authorList>
    </citation>
    <scope>NUCLEOTIDE SEQUENCE [LARGE SCALE GENOMIC DNA]</scope>
    <source>
        <strain>ATCC 33913 / DSM 3586 / NCPPB 528 / LMG 568 / P 25</strain>
    </source>
</reference>
<sequence>MTEGEGRIQLEPSWKARVGEWLLQPQMQELSAFLRQRKAANARVFPPGPQIFAAFDATPFEQVKVVVLGQDPYHGEGQAHGLCFSVLPGVPVPPSLLNIYKEIQDDLGIPRPDHGYLMPWARQGVLLLNAVLTVEQGRAGAHQNKGWEGFTDHVVETLNREREGLVFLLWGSYAQSKGKVIDQARHRVFKAPHPSPLSAHRGFLGCKHFSKTNEHLQRRGLSPIDWSLPSRAALDLSLAGG</sequence>